<comment type="function">
    <text evidence="1">Toxic component of a type II toxin-antitoxin (TA) system. Has RNase activity and preferentially cleaves at the 3'-end of purine ribonucleotides (By similarity).</text>
</comment>
<comment type="subunit">
    <text evidence="1">Forms a complex with YefM which inhibits its toxin activity.</text>
</comment>
<comment type="similarity">
    <text evidence="2">Belongs to the YoeB family.</text>
</comment>
<feature type="chain" id="PRO_0000404328" description="Toxin YoeB">
    <location>
        <begin position="1"/>
        <end position="86"/>
    </location>
</feature>
<feature type="active site" description="Proton acceptor" evidence="1">
    <location>
        <position position="46"/>
    </location>
</feature>
<feature type="active site" description="Proton donor" evidence="1">
    <location>
        <position position="83"/>
    </location>
</feature>
<name>YOEB_SYNY3</name>
<sequence>MKIAFTELSWHDYLWFQQNDKKLLKRINLLIKAIARDPFDGIGKPEPLKANLSGYWSRRINSEHRLVYTIADRDLLIISCRFHYQR</sequence>
<keyword id="KW-0255">Endonuclease</keyword>
<keyword id="KW-0378">Hydrolase</keyword>
<keyword id="KW-0540">Nuclease</keyword>
<keyword id="KW-1185">Reference proteome</keyword>
<keyword id="KW-0694">RNA-binding</keyword>
<keyword id="KW-1277">Toxin-antitoxin system</keyword>
<organism>
    <name type="scientific">Synechocystis sp. (strain ATCC 27184 / PCC 6803 / Kazusa)</name>
    <dbReference type="NCBI Taxonomy" id="1111708"/>
    <lineage>
        <taxon>Bacteria</taxon>
        <taxon>Bacillati</taxon>
        <taxon>Cyanobacteriota</taxon>
        <taxon>Cyanophyceae</taxon>
        <taxon>Synechococcales</taxon>
        <taxon>Merismopediaceae</taxon>
        <taxon>Synechocystis</taxon>
    </lineage>
</organism>
<evidence type="ECO:0000250" key="1"/>
<evidence type="ECO:0000305" key="2"/>
<accession>P0CJ64</accession>
<gene>
    <name type="primary">yoeB</name>
    <name type="ordered locus">ssr2754.1</name>
</gene>
<protein>
    <recommendedName>
        <fullName>Toxin YoeB</fullName>
        <ecNumber>3.1.-.-</ecNumber>
    </recommendedName>
    <alternativeName>
        <fullName>Endoribonuclease YoeB</fullName>
    </alternativeName>
    <alternativeName>
        <fullName>Putative mRNA interferase YoeB</fullName>
    </alternativeName>
</protein>
<dbReference type="EC" id="3.1.-.-"/>
<dbReference type="EMBL" id="BA000022">
    <property type="status" value="NOT_ANNOTATED_CDS"/>
    <property type="molecule type" value="Genomic_DNA"/>
</dbReference>
<dbReference type="SMR" id="P0CJ64"/>
<dbReference type="InParanoid" id="P0CJ64"/>
<dbReference type="PhylomeDB" id="P0CJ64"/>
<dbReference type="Proteomes" id="UP000001425">
    <property type="component" value="Chromosome"/>
</dbReference>
<dbReference type="GO" id="GO:0004519">
    <property type="term" value="F:endonuclease activity"/>
    <property type="evidence" value="ECO:0000318"/>
    <property type="project" value="GO_Central"/>
</dbReference>
<dbReference type="GO" id="GO:0003723">
    <property type="term" value="F:RNA binding"/>
    <property type="evidence" value="ECO:0007669"/>
    <property type="project" value="UniProtKB-KW"/>
</dbReference>
<dbReference type="GO" id="GO:0006401">
    <property type="term" value="P:RNA catabolic process"/>
    <property type="evidence" value="ECO:0007669"/>
    <property type="project" value="InterPro"/>
</dbReference>
<dbReference type="FunFam" id="3.30.2310.20:FF:000001">
    <property type="entry name" value="Addiction module toxin, Txe/YoeB family"/>
    <property type="match status" value="1"/>
</dbReference>
<dbReference type="Gene3D" id="3.30.2310.20">
    <property type="entry name" value="RelE-like"/>
    <property type="match status" value="1"/>
</dbReference>
<dbReference type="InterPro" id="IPR035093">
    <property type="entry name" value="RelE/ParE_toxin_dom_sf"/>
</dbReference>
<dbReference type="InterPro" id="IPR009614">
    <property type="entry name" value="YoeB_toxin"/>
</dbReference>
<dbReference type="NCBIfam" id="TIGR02116">
    <property type="entry name" value="toxin_Txe_YoeB"/>
    <property type="match status" value="1"/>
</dbReference>
<dbReference type="PANTHER" id="PTHR38039">
    <property type="entry name" value="TOXIN YOEB"/>
    <property type="match status" value="1"/>
</dbReference>
<dbReference type="PANTHER" id="PTHR38039:SF1">
    <property type="entry name" value="TOXIN YOEB"/>
    <property type="match status" value="1"/>
</dbReference>
<dbReference type="Pfam" id="PF06769">
    <property type="entry name" value="YoeB_toxin"/>
    <property type="match status" value="1"/>
</dbReference>
<dbReference type="SUPFAM" id="SSF143011">
    <property type="entry name" value="RelE-like"/>
    <property type="match status" value="1"/>
</dbReference>
<proteinExistence type="inferred from homology"/>
<reference key="1">
    <citation type="journal article" date="1995" name="DNA Res.">
        <title>Sequence analysis of the genome of the unicellular cyanobacterium Synechocystis sp. strain PCC6803. I. Sequence features in the 1 Mb region from map positions 64% to 92% of the genome.</title>
        <authorList>
            <person name="Kaneko T."/>
            <person name="Tanaka A."/>
            <person name="Sato S."/>
            <person name="Kotani H."/>
            <person name="Sazuka T."/>
            <person name="Miyajima N."/>
            <person name="Sugiura M."/>
            <person name="Tabata S."/>
        </authorList>
    </citation>
    <scope>NUCLEOTIDE SEQUENCE [LARGE SCALE GENOMIC DNA]</scope>
    <source>
        <strain>ATCC 27184 / PCC 6803 / N-1</strain>
    </source>
</reference>
<reference key="2">
    <citation type="journal article" date="1996" name="DNA Res.">
        <title>Sequence analysis of the genome of the unicellular cyanobacterium Synechocystis sp. strain PCC6803. II. Sequence determination of the entire genome and assignment of potential protein-coding regions.</title>
        <authorList>
            <person name="Kaneko T."/>
            <person name="Sato S."/>
            <person name="Kotani H."/>
            <person name="Tanaka A."/>
            <person name="Asamizu E."/>
            <person name="Nakamura Y."/>
            <person name="Miyajima N."/>
            <person name="Hirosawa M."/>
            <person name="Sugiura M."/>
            <person name="Sasamoto S."/>
            <person name="Kimura T."/>
            <person name="Hosouchi T."/>
            <person name="Matsuno A."/>
            <person name="Muraki A."/>
            <person name="Nakazaki N."/>
            <person name="Naruo K."/>
            <person name="Okumura S."/>
            <person name="Shimpo S."/>
            <person name="Takeuchi C."/>
            <person name="Wada T."/>
            <person name="Watanabe A."/>
            <person name="Yamada M."/>
            <person name="Yasuda M."/>
            <person name="Tabata S."/>
        </authorList>
    </citation>
    <scope>NUCLEOTIDE SEQUENCE [LARGE SCALE GENOMIC DNA]</scope>
    <source>
        <strain>ATCC 27184 / PCC 6803 / Kazusa</strain>
    </source>
</reference>